<name>KIP3_YEAST</name>
<keyword id="KW-0067">ATP-binding</keyword>
<keyword id="KW-0175">Coiled coil</keyword>
<keyword id="KW-0963">Cytoplasm</keyword>
<keyword id="KW-0206">Cytoskeleton</keyword>
<keyword id="KW-0493">Microtubule</keyword>
<keyword id="KW-0505">Motor protein</keyword>
<keyword id="KW-0547">Nucleotide-binding</keyword>
<keyword id="KW-1185">Reference proteome</keyword>
<feature type="chain" id="PRO_0000125404" description="Kinesin-like protein KIP3">
    <location>
        <begin position="1"/>
        <end position="805"/>
    </location>
</feature>
<feature type="domain" description="Kinesin motor" evidence="2">
    <location>
        <begin position="10"/>
        <end position="438"/>
    </location>
</feature>
<feature type="region of interest" description="Disordered" evidence="3">
    <location>
        <begin position="720"/>
        <end position="805"/>
    </location>
</feature>
<feature type="coiled-coil region" evidence="1">
    <location>
        <begin position="449"/>
        <end position="481"/>
    </location>
</feature>
<feature type="compositionally biased region" description="Polar residues" evidence="3">
    <location>
        <begin position="764"/>
        <end position="773"/>
    </location>
</feature>
<feature type="compositionally biased region" description="Low complexity" evidence="3">
    <location>
        <begin position="774"/>
        <end position="783"/>
    </location>
</feature>
<feature type="compositionally biased region" description="Polar residues" evidence="3">
    <location>
        <begin position="792"/>
        <end position="805"/>
    </location>
</feature>
<feature type="binding site" evidence="2">
    <location>
        <begin position="192"/>
        <end position="199"/>
    </location>
    <ligand>
        <name>ATP</name>
        <dbReference type="ChEBI" id="CHEBI:30616"/>
    </ligand>
</feature>
<gene>
    <name type="primary">KIP3</name>
    <name type="ordered locus">YGL216W</name>
</gene>
<protein>
    <recommendedName>
        <fullName>Kinesin-like protein KIP3</fullName>
    </recommendedName>
</protein>
<accession>P53086</accession>
<accession>D6VTU0</accession>
<dbReference type="EMBL" id="Z72739">
    <property type="protein sequence ID" value="CAA96933.1"/>
    <property type="molecule type" value="Genomic_DNA"/>
</dbReference>
<dbReference type="EMBL" id="BK006941">
    <property type="protein sequence ID" value="DAA07901.1"/>
    <property type="molecule type" value="Genomic_DNA"/>
</dbReference>
<dbReference type="PIR" id="S64238">
    <property type="entry name" value="S64238"/>
</dbReference>
<dbReference type="RefSeq" id="NP_011299.1">
    <property type="nucleotide sequence ID" value="NM_001181081.1"/>
</dbReference>
<dbReference type="SMR" id="P53086"/>
<dbReference type="BioGRID" id="33041">
    <property type="interactions" value="222"/>
</dbReference>
<dbReference type="DIP" id="DIP-6383N"/>
<dbReference type="FunCoup" id="P53086">
    <property type="interactions" value="157"/>
</dbReference>
<dbReference type="IntAct" id="P53086">
    <property type="interactions" value="5"/>
</dbReference>
<dbReference type="MINT" id="P53086"/>
<dbReference type="STRING" id="4932.YGL216W"/>
<dbReference type="iPTMnet" id="P53086"/>
<dbReference type="PaxDb" id="4932-YGL216W"/>
<dbReference type="PeptideAtlas" id="P53086"/>
<dbReference type="EnsemblFungi" id="YGL216W_mRNA">
    <property type="protein sequence ID" value="YGL216W"/>
    <property type="gene ID" value="YGL216W"/>
</dbReference>
<dbReference type="GeneID" id="852655"/>
<dbReference type="KEGG" id="sce:YGL216W"/>
<dbReference type="AGR" id="SGD:S000003184"/>
<dbReference type="SGD" id="S000003184">
    <property type="gene designation" value="KIP3"/>
</dbReference>
<dbReference type="VEuPathDB" id="FungiDB:YGL216W"/>
<dbReference type="eggNOG" id="KOG0242">
    <property type="taxonomic scope" value="Eukaryota"/>
</dbReference>
<dbReference type="GeneTree" id="ENSGT00940000169309"/>
<dbReference type="HOGENOM" id="CLU_001485_21_2_1"/>
<dbReference type="InParanoid" id="P53086"/>
<dbReference type="OMA" id="CVDDKML"/>
<dbReference type="OrthoDB" id="3176171at2759"/>
<dbReference type="BioCyc" id="YEAST:G3O-30692-MONOMER"/>
<dbReference type="BRENDA" id="5.6.1.3">
    <property type="organism ID" value="984"/>
</dbReference>
<dbReference type="BioGRID-ORCS" id="852655">
    <property type="hits" value="0 hits in 10 CRISPR screens"/>
</dbReference>
<dbReference type="PRO" id="PR:P53086"/>
<dbReference type="Proteomes" id="UP000002311">
    <property type="component" value="Chromosome VII"/>
</dbReference>
<dbReference type="RNAct" id="P53086">
    <property type="molecule type" value="protein"/>
</dbReference>
<dbReference type="GO" id="GO:0005737">
    <property type="term" value="C:cytoplasm"/>
    <property type="evidence" value="ECO:0000318"/>
    <property type="project" value="GO_Central"/>
</dbReference>
<dbReference type="GO" id="GO:0005881">
    <property type="term" value="C:cytoplasmic microtubule"/>
    <property type="evidence" value="ECO:0000314"/>
    <property type="project" value="SGD"/>
</dbReference>
<dbReference type="GO" id="GO:0005871">
    <property type="term" value="C:kinesin complex"/>
    <property type="evidence" value="ECO:0000318"/>
    <property type="project" value="GO_Central"/>
</dbReference>
<dbReference type="GO" id="GO:0035371">
    <property type="term" value="C:microtubule plus-end"/>
    <property type="evidence" value="ECO:0000314"/>
    <property type="project" value="UniProtKB"/>
</dbReference>
<dbReference type="GO" id="GO:0061673">
    <property type="term" value="C:mitotic spindle astral microtubule"/>
    <property type="evidence" value="ECO:0000314"/>
    <property type="project" value="UniProtKB"/>
</dbReference>
<dbReference type="GO" id="GO:1990023">
    <property type="term" value="C:mitotic spindle midzone"/>
    <property type="evidence" value="ECO:0000318"/>
    <property type="project" value="GO_Central"/>
</dbReference>
<dbReference type="GO" id="GO:0005880">
    <property type="term" value="C:nuclear microtubule"/>
    <property type="evidence" value="ECO:0000314"/>
    <property type="project" value="SGD"/>
</dbReference>
<dbReference type="GO" id="GO:0005634">
    <property type="term" value="C:nucleus"/>
    <property type="evidence" value="ECO:0000318"/>
    <property type="project" value="GO_Central"/>
</dbReference>
<dbReference type="GO" id="GO:0005524">
    <property type="term" value="F:ATP binding"/>
    <property type="evidence" value="ECO:0007669"/>
    <property type="project" value="UniProtKB-KW"/>
</dbReference>
<dbReference type="GO" id="GO:0016887">
    <property type="term" value="F:ATP hydrolysis activity"/>
    <property type="evidence" value="ECO:0000318"/>
    <property type="project" value="GO_Central"/>
</dbReference>
<dbReference type="GO" id="GO:0008017">
    <property type="term" value="F:microtubule binding"/>
    <property type="evidence" value="ECO:0000318"/>
    <property type="project" value="GO_Central"/>
</dbReference>
<dbReference type="GO" id="GO:0008574">
    <property type="term" value="F:plus-end-directed microtubule motor activity"/>
    <property type="evidence" value="ECO:0000314"/>
    <property type="project" value="SGD"/>
</dbReference>
<dbReference type="GO" id="GO:0070463">
    <property type="term" value="F:tubulin-dependent ATPase activity"/>
    <property type="evidence" value="ECO:0000314"/>
    <property type="project" value="SGD"/>
</dbReference>
<dbReference type="GO" id="GO:0000132">
    <property type="term" value="P:establishment of mitotic spindle orientation"/>
    <property type="evidence" value="ECO:0000315"/>
    <property type="project" value="SGD"/>
</dbReference>
<dbReference type="GO" id="GO:0045144">
    <property type="term" value="P:meiotic sister chromatid segregation"/>
    <property type="evidence" value="ECO:0000315"/>
    <property type="project" value="SGD"/>
</dbReference>
<dbReference type="GO" id="GO:0007019">
    <property type="term" value="P:microtubule depolymerization"/>
    <property type="evidence" value="ECO:0000318"/>
    <property type="project" value="GO_Central"/>
</dbReference>
<dbReference type="GO" id="GO:0007020">
    <property type="term" value="P:microtubule nucleation"/>
    <property type="evidence" value="ECO:0000315"/>
    <property type="project" value="SGD"/>
</dbReference>
<dbReference type="GO" id="GO:0007018">
    <property type="term" value="P:microtubule-based movement"/>
    <property type="evidence" value="ECO:0000318"/>
    <property type="project" value="GO_Central"/>
</dbReference>
<dbReference type="GO" id="GO:0000070">
    <property type="term" value="P:mitotic sister chromatid segregation"/>
    <property type="evidence" value="ECO:0000318"/>
    <property type="project" value="GO_Central"/>
</dbReference>
<dbReference type="GO" id="GO:0090307">
    <property type="term" value="P:mitotic spindle assembly"/>
    <property type="evidence" value="ECO:0000315"/>
    <property type="project" value="SGD"/>
</dbReference>
<dbReference type="GO" id="GO:0051228">
    <property type="term" value="P:mitotic spindle disassembly"/>
    <property type="evidence" value="ECO:0000315"/>
    <property type="project" value="SGD"/>
</dbReference>
<dbReference type="GO" id="GO:0007052">
    <property type="term" value="P:mitotic spindle organization"/>
    <property type="evidence" value="ECO:0000315"/>
    <property type="project" value="SGD"/>
</dbReference>
<dbReference type="GO" id="GO:0031115">
    <property type="term" value="P:negative regulation of microtubule polymerization"/>
    <property type="evidence" value="ECO:0000315"/>
    <property type="project" value="SGD"/>
</dbReference>
<dbReference type="GO" id="GO:0030473">
    <property type="term" value="P:nuclear migration along microtubule"/>
    <property type="evidence" value="ECO:0000315"/>
    <property type="project" value="SGD"/>
</dbReference>
<dbReference type="GO" id="GO:0070462">
    <property type="term" value="P:plus-end specific microtubule depolymerization"/>
    <property type="evidence" value="ECO:0000314"/>
    <property type="project" value="SGD"/>
</dbReference>
<dbReference type="GO" id="GO:0032888">
    <property type="term" value="P:regulation of mitotic spindle elongation"/>
    <property type="evidence" value="ECO:0000315"/>
    <property type="project" value="SGD"/>
</dbReference>
<dbReference type="CDD" id="cd01370">
    <property type="entry name" value="KISc_KIP3_like"/>
    <property type="match status" value="1"/>
</dbReference>
<dbReference type="FunFam" id="3.40.850.10:FF:000090">
    <property type="entry name" value="Kinesin-like protein"/>
    <property type="match status" value="1"/>
</dbReference>
<dbReference type="Gene3D" id="3.40.850.10">
    <property type="entry name" value="Kinesin motor domain"/>
    <property type="match status" value="1"/>
</dbReference>
<dbReference type="InterPro" id="IPR027640">
    <property type="entry name" value="Kinesin-like_fam"/>
</dbReference>
<dbReference type="InterPro" id="IPR019821">
    <property type="entry name" value="Kinesin_motor_CS"/>
</dbReference>
<dbReference type="InterPro" id="IPR001752">
    <property type="entry name" value="Kinesin_motor_dom"/>
</dbReference>
<dbReference type="InterPro" id="IPR036961">
    <property type="entry name" value="Kinesin_motor_dom_sf"/>
</dbReference>
<dbReference type="InterPro" id="IPR027417">
    <property type="entry name" value="P-loop_NTPase"/>
</dbReference>
<dbReference type="PANTHER" id="PTHR47968">
    <property type="entry name" value="CENTROMERE PROTEIN E"/>
    <property type="match status" value="1"/>
</dbReference>
<dbReference type="PANTHER" id="PTHR47968:SF13">
    <property type="entry name" value="KINESIN-LIKE PROTEIN KIF19 ISOFORM X1"/>
    <property type="match status" value="1"/>
</dbReference>
<dbReference type="Pfam" id="PF00225">
    <property type="entry name" value="Kinesin"/>
    <property type="match status" value="1"/>
</dbReference>
<dbReference type="PRINTS" id="PR00380">
    <property type="entry name" value="KINESINHEAVY"/>
</dbReference>
<dbReference type="SMART" id="SM00129">
    <property type="entry name" value="KISc"/>
    <property type="match status" value="1"/>
</dbReference>
<dbReference type="SUPFAM" id="SSF52540">
    <property type="entry name" value="P-loop containing nucleoside triphosphate hydrolases"/>
    <property type="match status" value="1"/>
</dbReference>
<dbReference type="PROSITE" id="PS00411">
    <property type="entry name" value="KINESIN_MOTOR_1"/>
    <property type="match status" value="1"/>
</dbReference>
<dbReference type="PROSITE" id="PS50067">
    <property type="entry name" value="KINESIN_MOTOR_2"/>
    <property type="match status" value="1"/>
</dbReference>
<proteinExistence type="evidence at protein level"/>
<reference key="1">
    <citation type="journal article" date="1997" name="Yeast">
        <title>Sequence analysis of 203 kilobases from Saccharomyces cerevisiae chromosome VII.</title>
        <authorList>
            <person name="Rieger M."/>
            <person name="Brueckner M."/>
            <person name="Schaefer M."/>
            <person name="Mueller-Auer S."/>
        </authorList>
    </citation>
    <scope>NUCLEOTIDE SEQUENCE [GENOMIC DNA]</scope>
    <source>
        <strain>ATCC 204508 / S288c</strain>
    </source>
</reference>
<reference key="2">
    <citation type="journal article" date="1997" name="Nature">
        <title>The nucleotide sequence of Saccharomyces cerevisiae chromosome VII.</title>
        <authorList>
            <person name="Tettelin H."/>
            <person name="Agostoni-Carbone M.L."/>
            <person name="Albermann K."/>
            <person name="Albers M."/>
            <person name="Arroyo J."/>
            <person name="Backes U."/>
            <person name="Barreiros T."/>
            <person name="Bertani I."/>
            <person name="Bjourson A.J."/>
            <person name="Brueckner M."/>
            <person name="Bruschi C.V."/>
            <person name="Carignani G."/>
            <person name="Castagnoli L."/>
            <person name="Cerdan E."/>
            <person name="Clemente M.L."/>
            <person name="Coblenz A."/>
            <person name="Coglievina M."/>
            <person name="Coissac E."/>
            <person name="Defoor E."/>
            <person name="Del Bino S."/>
            <person name="Delius H."/>
            <person name="Delneri D."/>
            <person name="de Wergifosse P."/>
            <person name="Dujon B."/>
            <person name="Durand P."/>
            <person name="Entian K.-D."/>
            <person name="Eraso P."/>
            <person name="Escribano V."/>
            <person name="Fabiani L."/>
            <person name="Fartmann B."/>
            <person name="Feroli F."/>
            <person name="Feuermann M."/>
            <person name="Frontali L."/>
            <person name="Garcia-Gonzalez M."/>
            <person name="Garcia-Saez M.I."/>
            <person name="Goffeau A."/>
            <person name="Guerreiro P."/>
            <person name="Hani J."/>
            <person name="Hansen M."/>
            <person name="Hebling U."/>
            <person name="Hernandez K."/>
            <person name="Heumann K."/>
            <person name="Hilger F."/>
            <person name="Hofmann B."/>
            <person name="Indge K.J."/>
            <person name="James C.M."/>
            <person name="Klima R."/>
            <person name="Koetter P."/>
            <person name="Kramer B."/>
            <person name="Kramer W."/>
            <person name="Lauquin G."/>
            <person name="Leuther H."/>
            <person name="Louis E.J."/>
            <person name="Maillier E."/>
            <person name="Marconi A."/>
            <person name="Martegani E."/>
            <person name="Mazon M.J."/>
            <person name="Mazzoni C."/>
            <person name="McReynolds A.D.K."/>
            <person name="Melchioretto P."/>
            <person name="Mewes H.-W."/>
            <person name="Minenkova O."/>
            <person name="Mueller-Auer S."/>
            <person name="Nawrocki A."/>
            <person name="Netter P."/>
            <person name="Neu R."/>
            <person name="Nombela C."/>
            <person name="Oliver S.G."/>
            <person name="Panzeri L."/>
            <person name="Paoluzi S."/>
            <person name="Plevani P."/>
            <person name="Portetelle D."/>
            <person name="Portillo F."/>
            <person name="Potier S."/>
            <person name="Purnelle B."/>
            <person name="Rieger M."/>
            <person name="Riles L."/>
            <person name="Rinaldi T."/>
            <person name="Robben J."/>
            <person name="Rodrigues-Pousada C."/>
            <person name="Rodriguez-Belmonte E."/>
            <person name="Rodriguez-Torres A.M."/>
            <person name="Rose M."/>
            <person name="Ruzzi M."/>
            <person name="Saliola M."/>
            <person name="Sanchez-Perez M."/>
            <person name="Schaefer B."/>
            <person name="Schaefer M."/>
            <person name="Scharfe M."/>
            <person name="Schmidheini T."/>
            <person name="Schreer A."/>
            <person name="Skala J."/>
            <person name="Souciet J.-L."/>
            <person name="Steensma H.Y."/>
            <person name="Talla E."/>
            <person name="Thierry A."/>
            <person name="Vandenbol M."/>
            <person name="van der Aart Q.J.M."/>
            <person name="Van Dyck L."/>
            <person name="Vanoni M."/>
            <person name="Verhasselt P."/>
            <person name="Voet M."/>
            <person name="Volckaert G."/>
            <person name="Wambutt R."/>
            <person name="Watson M.D."/>
            <person name="Weber N."/>
            <person name="Wedler E."/>
            <person name="Wedler H."/>
            <person name="Wipfli P."/>
            <person name="Wolf K."/>
            <person name="Wright L.F."/>
            <person name="Zaccaria P."/>
            <person name="Zimmermann M."/>
            <person name="Zollner A."/>
            <person name="Kleine K."/>
        </authorList>
    </citation>
    <scope>NUCLEOTIDE SEQUENCE [LARGE SCALE GENOMIC DNA]</scope>
    <source>
        <strain>ATCC 204508 / S288c</strain>
    </source>
</reference>
<reference key="3">
    <citation type="journal article" date="2014" name="G3 (Bethesda)">
        <title>The reference genome sequence of Saccharomyces cerevisiae: Then and now.</title>
        <authorList>
            <person name="Engel S.R."/>
            <person name="Dietrich F.S."/>
            <person name="Fisk D.G."/>
            <person name="Binkley G."/>
            <person name="Balakrishnan R."/>
            <person name="Costanzo M.C."/>
            <person name="Dwight S.S."/>
            <person name="Hitz B.C."/>
            <person name="Karra K."/>
            <person name="Nash R.S."/>
            <person name="Weng S."/>
            <person name="Wong E.D."/>
            <person name="Lloyd P."/>
            <person name="Skrzypek M.S."/>
            <person name="Miyasato S.R."/>
            <person name="Simison M."/>
            <person name="Cherry J.M."/>
        </authorList>
    </citation>
    <scope>GENOME REANNOTATION</scope>
    <source>
        <strain>ATCC 204508 / S288c</strain>
    </source>
</reference>
<reference key="4">
    <citation type="journal article" date="2003" name="Nature">
        <title>Global analysis of protein expression in yeast.</title>
        <authorList>
            <person name="Ghaemmaghami S."/>
            <person name="Huh W.-K."/>
            <person name="Bower K."/>
            <person name="Howson R.W."/>
            <person name="Belle A."/>
            <person name="Dephoure N."/>
            <person name="O'Shea E.K."/>
            <person name="Weissman J.S."/>
        </authorList>
    </citation>
    <scope>LEVEL OF PROTEIN EXPRESSION [LARGE SCALE ANALYSIS]</scope>
</reference>
<reference key="5">
    <citation type="journal article" date="2008" name="Mol. Cell. Proteomics">
        <title>A multidimensional chromatography technology for in-depth phosphoproteome analysis.</title>
        <authorList>
            <person name="Albuquerque C.P."/>
            <person name="Smolka M.B."/>
            <person name="Payne S.H."/>
            <person name="Bafna V."/>
            <person name="Eng J."/>
            <person name="Zhou H."/>
        </authorList>
    </citation>
    <scope>IDENTIFICATION BY MASS SPECTROMETRY [LARGE SCALE ANALYSIS]</scope>
</reference>
<reference key="6">
    <citation type="journal article" date="2012" name="Hum. Mol. Genet.">
        <title>An inherited TUBB2B mutation alters a kinesin-binding site and causes polymicrogyria, CFEOM and axon dysinnervation.</title>
        <authorList>
            <person name="Cederquist G.Y."/>
            <person name="Luchniak A."/>
            <person name="Tischfield M.A."/>
            <person name="Peeva M."/>
            <person name="Song Y."/>
            <person name="Menezes M.P."/>
            <person name="Chan W.M."/>
            <person name="Andrews C."/>
            <person name="Chew S."/>
            <person name="Jamieson R.V."/>
            <person name="Gomes L."/>
            <person name="Flaherty M."/>
            <person name="Grant P.E."/>
            <person name="Gupta M.L. Jr."/>
            <person name="Engle E.C."/>
        </authorList>
    </citation>
    <scope>SUBCELLULAR LOCATION</scope>
</reference>
<comment type="subcellular location">
    <subcellularLocation>
        <location evidence="5">Cytoplasm</location>
        <location evidence="5">Cytoskeleton</location>
    </subcellularLocation>
    <text evidence="5">Colocalizes with beta-tubulin TUB2 at the plus ends of growing microtubules and along the microtubule lattice.</text>
</comment>
<comment type="miscellaneous">
    <text evidence="4">Present with 736 molecules/cell in log phase SD medium.</text>
</comment>
<comment type="similarity">
    <text evidence="2">Belongs to the TRAFAC class myosin-kinesin ATPase superfamily. Kinesin family. Kinesin II subfamily.</text>
</comment>
<organism>
    <name type="scientific">Saccharomyces cerevisiae (strain ATCC 204508 / S288c)</name>
    <name type="common">Baker's yeast</name>
    <dbReference type="NCBI Taxonomy" id="559292"/>
    <lineage>
        <taxon>Eukaryota</taxon>
        <taxon>Fungi</taxon>
        <taxon>Dikarya</taxon>
        <taxon>Ascomycota</taxon>
        <taxon>Saccharomycotina</taxon>
        <taxon>Saccharomycetes</taxon>
        <taxon>Saccharomycetales</taxon>
        <taxon>Saccharomycetaceae</taxon>
        <taxon>Saccharomyces</taxon>
    </lineage>
</organism>
<evidence type="ECO:0000255" key="1"/>
<evidence type="ECO:0000255" key="2">
    <source>
        <dbReference type="PROSITE-ProRule" id="PRU00283"/>
    </source>
</evidence>
<evidence type="ECO:0000256" key="3">
    <source>
        <dbReference type="SAM" id="MobiDB-lite"/>
    </source>
</evidence>
<evidence type="ECO:0000269" key="4">
    <source>
    </source>
</evidence>
<evidence type="ECO:0000269" key="5">
    <source>
    </source>
</evidence>
<sequence>MNVPETRQSSIVVAIRVRPFTSMEKTRLVNEASGAEANFPGLGDSSLILPMSNNSDSDIDIDAEEGSTRSKRNSLLRRKVIRPEGIRKIVDCVDDRMLIFDPADRNPLNKVSDQVLNSMRARATKATASSINNSNATNKFSSQRRRHGGEIKFVFDKLFDETSSQARVYKETTSPLLDSVLDGFNSTVFAYGATGCGKTYTVSGTPSQPGIIFLAMEELFNKITDLKDEKDFEISLSYLEIYNERIRDLLKPETPSKRLVIREDTQNHIKVANLSYHHPNTVEDVMDLVVQGNINRTTSPTEANEVSSRSHAVLQIHIMQTNKLVDLTSQHTFATLSIIDLAGSERAAATRNRGIRLHEGANINRSLLALGNCINALCLNDGSRSCHIPYRDSKLTRLLKFSLGGNCKTVMIVCISPSSSHYDETLNTLKYANRAKEIKTKIIRNQQSLSRHVGSYLKMITEQKRQIEELREREEKMISLKLTKYKLNKEKIQLAINECVNRVQQTYAGVETYQVAKTLKSLILCKRRFLQMVKLEVDNLILLFEREESTAAEMQPVISNCRMISGQLYNKIHELEMKFDETDTLSSVIHQVHSIDLNKLREMEDWDETYDLVYLESCLNQISELQRNEILVNSSIMTEKLMSDPGLNSRFKFLSKWLMNRTPNIESIIQDLVHIDEEFESFARTFIANPDSNFTNTNINIINTTAADLAVPAETLQRQNFSQKKVKWTSPDLSPSPMIEPQPELEPELHQDQDAIASEVDVSMQDTTFNEQGPSTPSAPTTAVPRRKMRSSLLTHQSLLATARK</sequence>